<proteinExistence type="inferred from homology"/>
<dbReference type="EMBL" id="CR543861">
    <property type="protein sequence ID" value="CAG69060.1"/>
    <property type="molecule type" value="Genomic_DNA"/>
</dbReference>
<dbReference type="RefSeq" id="WP_004927935.1">
    <property type="nucleotide sequence ID" value="NC_005966.1"/>
</dbReference>
<dbReference type="SMR" id="Q6FA53"/>
<dbReference type="STRING" id="202950.GCA_001485005_00128"/>
<dbReference type="GeneID" id="45234597"/>
<dbReference type="KEGG" id="aci:ACIAD2269"/>
<dbReference type="eggNOG" id="COG0052">
    <property type="taxonomic scope" value="Bacteria"/>
</dbReference>
<dbReference type="HOGENOM" id="CLU_040318_1_2_6"/>
<dbReference type="OrthoDB" id="9808036at2"/>
<dbReference type="BioCyc" id="ASP62977:ACIAD_RS10395-MONOMER"/>
<dbReference type="Proteomes" id="UP000000430">
    <property type="component" value="Chromosome"/>
</dbReference>
<dbReference type="GO" id="GO:0022627">
    <property type="term" value="C:cytosolic small ribosomal subunit"/>
    <property type="evidence" value="ECO:0007669"/>
    <property type="project" value="TreeGrafter"/>
</dbReference>
<dbReference type="GO" id="GO:0003735">
    <property type="term" value="F:structural constituent of ribosome"/>
    <property type="evidence" value="ECO:0007669"/>
    <property type="project" value="InterPro"/>
</dbReference>
<dbReference type="GO" id="GO:0006412">
    <property type="term" value="P:translation"/>
    <property type="evidence" value="ECO:0007669"/>
    <property type="project" value="UniProtKB-UniRule"/>
</dbReference>
<dbReference type="CDD" id="cd01425">
    <property type="entry name" value="RPS2"/>
    <property type="match status" value="1"/>
</dbReference>
<dbReference type="FunFam" id="1.10.287.610:FF:000001">
    <property type="entry name" value="30S ribosomal protein S2"/>
    <property type="match status" value="1"/>
</dbReference>
<dbReference type="Gene3D" id="3.40.50.10490">
    <property type="entry name" value="Glucose-6-phosphate isomerase like protein, domain 1"/>
    <property type="match status" value="1"/>
</dbReference>
<dbReference type="Gene3D" id="1.10.287.610">
    <property type="entry name" value="Helix hairpin bin"/>
    <property type="match status" value="1"/>
</dbReference>
<dbReference type="HAMAP" id="MF_00291_B">
    <property type="entry name" value="Ribosomal_uS2_B"/>
    <property type="match status" value="1"/>
</dbReference>
<dbReference type="InterPro" id="IPR001865">
    <property type="entry name" value="Ribosomal_uS2"/>
</dbReference>
<dbReference type="InterPro" id="IPR005706">
    <property type="entry name" value="Ribosomal_uS2_bac/mit/plastid"/>
</dbReference>
<dbReference type="InterPro" id="IPR018130">
    <property type="entry name" value="Ribosomal_uS2_CS"/>
</dbReference>
<dbReference type="InterPro" id="IPR023591">
    <property type="entry name" value="Ribosomal_uS2_flav_dom_sf"/>
</dbReference>
<dbReference type="NCBIfam" id="TIGR01011">
    <property type="entry name" value="rpsB_bact"/>
    <property type="match status" value="1"/>
</dbReference>
<dbReference type="PANTHER" id="PTHR12534">
    <property type="entry name" value="30S RIBOSOMAL PROTEIN S2 PROKARYOTIC AND ORGANELLAR"/>
    <property type="match status" value="1"/>
</dbReference>
<dbReference type="PANTHER" id="PTHR12534:SF0">
    <property type="entry name" value="SMALL RIBOSOMAL SUBUNIT PROTEIN US2M"/>
    <property type="match status" value="1"/>
</dbReference>
<dbReference type="Pfam" id="PF00318">
    <property type="entry name" value="Ribosomal_S2"/>
    <property type="match status" value="1"/>
</dbReference>
<dbReference type="PRINTS" id="PR00395">
    <property type="entry name" value="RIBOSOMALS2"/>
</dbReference>
<dbReference type="SUPFAM" id="SSF52313">
    <property type="entry name" value="Ribosomal protein S2"/>
    <property type="match status" value="1"/>
</dbReference>
<dbReference type="PROSITE" id="PS00962">
    <property type="entry name" value="RIBOSOMAL_S2_1"/>
    <property type="match status" value="1"/>
</dbReference>
<dbReference type="PROSITE" id="PS00963">
    <property type="entry name" value="RIBOSOMAL_S2_2"/>
    <property type="match status" value="1"/>
</dbReference>
<keyword id="KW-0687">Ribonucleoprotein</keyword>
<keyword id="KW-0689">Ribosomal protein</keyword>
<gene>
    <name evidence="1" type="primary">rpsB</name>
    <name type="ordered locus">ACIAD2269</name>
</gene>
<protein>
    <recommendedName>
        <fullName evidence="1">Small ribosomal subunit protein uS2</fullName>
    </recommendedName>
    <alternativeName>
        <fullName evidence="2">30S ribosomal protein S2</fullName>
    </alternativeName>
</protein>
<name>RS2_ACIAD</name>
<evidence type="ECO:0000255" key="1">
    <source>
        <dbReference type="HAMAP-Rule" id="MF_00291"/>
    </source>
</evidence>
<evidence type="ECO:0000305" key="2"/>
<comment type="similarity">
    <text evidence="1">Belongs to the universal ribosomal protein uS2 family.</text>
</comment>
<organism>
    <name type="scientific">Acinetobacter baylyi (strain ATCC 33305 / BD413 / ADP1)</name>
    <dbReference type="NCBI Taxonomy" id="62977"/>
    <lineage>
        <taxon>Bacteria</taxon>
        <taxon>Pseudomonadati</taxon>
        <taxon>Pseudomonadota</taxon>
        <taxon>Gammaproteobacteria</taxon>
        <taxon>Moraxellales</taxon>
        <taxon>Moraxellaceae</taxon>
        <taxon>Acinetobacter</taxon>
    </lineage>
</organism>
<feature type="chain" id="PRO_0000134117" description="Small ribosomal subunit protein uS2">
    <location>
        <begin position="1"/>
        <end position="249"/>
    </location>
</feature>
<accession>Q6FA53</accession>
<reference key="1">
    <citation type="journal article" date="2004" name="Nucleic Acids Res.">
        <title>Unique features revealed by the genome sequence of Acinetobacter sp. ADP1, a versatile and naturally transformation competent bacterium.</title>
        <authorList>
            <person name="Barbe V."/>
            <person name="Vallenet D."/>
            <person name="Fonknechten N."/>
            <person name="Kreimeyer A."/>
            <person name="Oztas S."/>
            <person name="Labarre L."/>
            <person name="Cruveiller S."/>
            <person name="Robert C."/>
            <person name="Duprat S."/>
            <person name="Wincker P."/>
            <person name="Ornston L.N."/>
            <person name="Weissenbach J."/>
            <person name="Marliere P."/>
            <person name="Cohen G.N."/>
            <person name="Medigue C."/>
        </authorList>
    </citation>
    <scope>NUCLEOTIDE SEQUENCE [LARGE SCALE GENOMIC DNA]</scope>
    <source>
        <strain>ATCC 33305 / BD413 / ADP1</strain>
    </source>
</reference>
<sequence length="249" mass="27524">MADYNVSMRDLLQAGAHFGHQTRFWNPKMRQYIFGARNKIHIINLEHTVPALNDALNFANQLASKKNKVLFVGTKRAASNIIREQAQRAGQPYVDHRWLGGMLTNWKTLRQSINRLKDLQTQSQDGTFAKLTKREALERTREMEKLERSLGGVKNMGGLPDALFVIDVDHEAIAIKEAKNLGIPVIGIVDTNSNPDNVDYVIPGNDDAIRAVTLYASAMADAILAGKEYAQSQANAQAKGEEAPAASEA</sequence>